<dbReference type="EC" id="1.17.7.3" evidence="1"/>
<dbReference type="EMBL" id="AM039952">
    <property type="protein sequence ID" value="CAJ23506.1"/>
    <property type="molecule type" value="Genomic_DNA"/>
</dbReference>
<dbReference type="RefSeq" id="WP_003481991.1">
    <property type="nucleotide sequence ID" value="NZ_CP017190.1"/>
</dbReference>
<dbReference type="SMR" id="Q3BUK3"/>
<dbReference type="STRING" id="456327.BJD11_13355"/>
<dbReference type="GeneID" id="63991067"/>
<dbReference type="KEGG" id="xcv:XCV1829"/>
<dbReference type="eggNOG" id="COG0821">
    <property type="taxonomic scope" value="Bacteria"/>
</dbReference>
<dbReference type="HOGENOM" id="CLU_042258_1_0_6"/>
<dbReference type="UniPathway" id="UPA00056">
    <property type="reaction ID" value="UER00096"/>
</dbReference>
<dbReference type="Proteomes" id="UP000007069">
    <property type="component" value="Chromosome"/>
</dbReference>
<dbReference type="GO" id="GO:0051539">
    <property type="term" value="F:4 iron, 4 sulfur cluster binding"/>
    <property type="evidence" value="ECO:0007669"/>
    <property type="project" value="UniProtKB-UniRule"/>
</dbReference>
<dbReference type="GO" id="GO:0046429">
    <property type="term" value="F:4-hydroxy-3-methylbut-2-en-1-yl diphosphate synthase activity (ferredoxin)"/>
    <property type="evidence" value="ECO:0007669"/>
    <property type="project" value="UniProtKB-UniRule"/>
</dbReference>
<dbReference type="GO" id="GO:0141197">
    <property type="term" value="F:4-hydroxy-3-methylbut-2-enyl-diphosphate synthase activity (flavodoxin)"/>
    <property type="evidence" value="ECO:0007669"/>
    <property type="project" value="UniProtKB-EC"/>
</dbReference>
<dbReference type="GO" id="GO:0005506">
    <property type="term" value="F:iron ion binding"/>
    <property type="evidence" value="ECO:0007669"/>
    <property type="project" value="InterPro"/>
</dbReference>
<dbReference type="GO" id="GO:0019288">
    <property type="term" value="P:isopentenyl diphosphate biosynthetic process, methylerythritol 4-phosphate pathway"/>
    <property type="evidence" value="ECO:0007669"/>
    <property type="project" value="UniProtKB-UniRule"/>
</dbReference>
<dbReference type="GO" id="GO:0016114">
    <property type="term" value="P:terpenoid biosynthetic process"/>
    <property type="evidence" value="ECO:0007669"/>
    <property type="project" value="InterPro"/>
</dbReference>
<dbReference type="FunFam" id="3.30.413.10:FF:000012">
    <property type="entry name" value="4-hydroxy-3-methylbut-2-en-1-yl diphosphate synthase (flavodoxin)"/>
    <property type="match status" value="1"/>
</dbReference>
<dbReference type="Gene3D" id="3.20.20.20">
    <property type="entry name" value="Dihydropteroate synthase-like"/>
    <property type="match status" value="1"/>
</dbReference>
<dbReference type="Gene3D" id="3.30.413.10">
    <property type="entry name" value="Sulfite Reductase Hemoprotein, domain 1"/>
    <property type="match status" value="1"/>
</dbReference>
<dbReference type="HAMAP" id="MF_00159">
    <property type="entry name" value="IspG"/>
    <property type="match status" value="1"/>
</dbReference>
<dbReference type="InterPro" id="IPR011005">
    <property type="entry name" value="Dihydropteroate_synth-like_sf"/>
</dbReference>
<dbReference type="InterPro" id="IPR016425">
    <property type="entry name" value="IspG_bac"/>
</dbReference>
<dbReference type="InterPro" id="IPR004588">
    <property type="entry name" value="IspG_bac-typ"/>
</dbReference>
<dbReference type="InterPro" id="IPR045854">
    <property type="entry name" value="NO2/SO3_Rdtase_4Fe4S_sf"/>
</dbReference>
<dbReference type="NCBIfam" id="TIGR00612">
    <property type="entry name" value="ispG_gcpE"/>
    <property type="match status" value="1"/>
</dbReference>
<dbReference type="NCBIfam" id="NF001540">
    <property type="entry name" value="PRK00366.1"/>
    <property type="match status" value="1"/>
</dbReference>
<dbReference type="PANTHER" id="PTHR30454">
    <property type="entry name" value="4-HYDROXY-3-METHYLBUT-2-EN-1-YL DIPHOSPHATE SYNTHASE"/>
    <property type="match status" value="1"/>
</dbReference>
<dbReference type="PANTHER" id="PTHR30454:SF0">
    <property type="entry name" value="4-HYDROXY-3-METHYLBUT-2-EN-1-YL DIPHOSPHATE SYNTHASE (FERREDOXIN), CHLOROPLASTIC"/>
    <property type="match status" value="1"/>
</dbReference>
<dbReference type="Pfam" id="PF04551">
    <property type="entry name" value="GcpE"/>
    <property type="match status" value="1"/>
</dbReference>
<dbReference type="PIRSF" id="PIRSF004640">
    <property type="entry name" value="IspG"/>
    <property type="match status" value="1"/>
</dbReference>
<reference key="1">
    <citation type="journal article" date="2005" name="J. Bacteriol.">
        <title>Insights into genome plasticity and pathogenicity of the plant pathogenic Bacterium Xanthomonas campestris pv. vesicatoria revealed by the complete genome sequence.</title>
        <authorList>
            <person name="Thieme F."/>
            <person name="Koebnik R."/>
            <person name="Bekel T."/>
            <person name="Berger C."/>
            <person name="Boch J."/>
            <person name="Buettner D."/>
            <person name="Caldana C."/>
            <person name="Gaigalat L."/>
            <person name="Goesmann A."/>
            <person name="Kay S."/>
            <person name="Kirchner O."/>
            <person name="Lanz C."/>
            <person name="Linke B."/>
            <person name="McHardy A.C."/>
            <person name="Meyer F."/>
            <person name="Mittenhuber G."/>
            <person name="Nies D.H."/>
            <person name="Niesbach-Kloesgen U."/>
            <person name="Patschkowski T."/>
            <person name="Rueckert C."/>
            <person name="Rupp O."/>
            <person name="Schneiker S."/>
            <person name="Schuster S.C."/>
            <person name="Vorhoelter F.J."/>
            <person name="Weber E."/>
            <person name="Puehler A."/>
            <person name="Bonas U."/>
            <person name="Bartels D."/>
            <person name="Kaiser O."/>
        </authorList>
    </citation>
    <scope>NUCLEOTIDE SEQUENCE [LARGE SCALE GENOMIC DNA]</scope>
    <source>
        <strain>85-10</strain>
    </source>
</reference>
<gene>
    <name evidence="1" type="primary">ispG</name>
    <name type="ordered locus">XCV1829</name>
</gene>
<keyword id="KW-0004">4Fe-4S</keyword>
<keyword id="KW-0408">Iron</keyword>
<keyword id="KW-0411">Iron-sulfur</keyword>
<keyword id="KW-0414">Isoprene biosynthesis</keyword>
<keyword id="KW-0479">Metal-binding</keyword>
<keyword id="KW-0560">Oxidoreductase</keyword>
<comment type="function">
    <text evidence="1">Converts 2C-methyl-D-erythritol 2,4-cyclodiphosphate (ME-2,4cPP) into 1-hydroxy-2-methyl-2-(E)-butenyl 4-diphosphate.</text>
</comment>
<comment type="catalytic activity">
    <reaction evidence="1">
        <text>(2E)-4-hydroxy-3-methylbut-2-enyl diphosphate + oxidized [flavodoxin] + H2O + 2 H(+) = 2-C-methyl-D-erythritol 2,4-cyclic diphosphate + reduced [flavodoxin]</text>
        <dbReference type="Rhea" id="RHEA:43604"/>
        <dbReference type="Rhea" id="RHEA-COMP:10622"/>
        <dbReference type="Rhea" id="RHEA-COMP:10623"/>
        <dbReference type="ChEBI" id="CHEBI:15377"/>
        <dbReference type="ChEBI" id="CHEBI:15378"/>
        <dbReference type="ChEBI" id="CHEBI:57618"/>
        <dbReference type="ChEBI" id="CHEBI:58210"/>
        <dbReference type="ChEBI" id="CHEBI:58483"/>
        <dbReference type="ChEBI" id="CHEBI:128753"/>
        <dbReference type="EC" id="1.17.7.3"/>
    </reaction>
</comment>
<comment type="cofactor">
    <cofactor evidence="1">
        <name>[4Fe-4S] cluster</name>
        <dbReference type="ChEBI" id="CHEBI:49883"/>
    </cofactor>
    <text evidence="1">Binds 1 [4Fe-4S] cluster.</text>
</comment>
<comment type="pathway">
    <text evidence="1">Isoprenoid biosynthesis; isopentenyl diphosphate biosynthesis via DXP pathway; isopentenyl diphosphate from 1-deoxy-D-xylulose 5-phosphate: step 5/6.</text>
</comment>
<comment type="similarity">
    <text evidence="1">Belongs to the IspG family.</text>
</comment>
<sequence length="421" mass="45145">MHDAVTRPTPPADATAWPRRITQAVKIGSVTVGGGHPVVVQSMTNTDTADIAGSVKQVADLWRAGSEMVRLTVNNAESAAAIPRIVDKLRMMGIEVPLIGDFHYNGHQLLAAEPACAEALAKYRINPGNVGFGKKKDLQFGQLIEFAIKYGKPVRIGANWGSLDQSLAAQLMDENSQRDTPWDAGRVLREALIRSAVDSAERAVELGLPRERIILSAKVSGVQELIAVYRDMASRCDFALHLGLTEAGIGSKGIVASAAALSVLLQEGIGDTIRISLTPEPGQSRTQEVVVAQELLQTTGQRAFTPMVTACPGCGRTTSEFFQELAGVVQNHVRAKMPEWKITNPGAENMTLAVMGCVVNGPGESRHANIGISLPGTGEAPSAPVFIDGEKSVTLRGENIAYEFIELIDQYVERTYVRRAG</sequence>
<accession>Q3BUK3</accession>
<protein>
    <recommendedName>
        <fullName evidence="1">4-hydroxy-3-methylbut-2-en-1-yl diphosphate synthase (flavodoxin)</fullName>
        <ecNumber evidence="1">1.17.7.3</ecNumber>
    </recommendedName>
    <alternativeName>
        <fullName evidence="1">1-hydroxy-2-methyl-2-(E)-butenyl 4-diphosphate synthase</fullName>
    </alternativeName>
</protein>
<evidence type="ECO:0000255" key="1">
    <source>
        <dbReference type="HAMAP-Rule" id="MF_00159"/>
    </source>
</evidence>
<name>ISPG_XANE5</name>
<feature type="chain" id="PRO_1000011542" description="4-hydroxy-3-methylbut-2-en-1-yl diphosphate synthase (flavodoxin)">
    <location>
        <begin position="1"/>
        <end position="421"/>
    </location>
</feature>
<feature type="binding site" evidence="1">
    <location>
        <position position="311"/>
    </location>
    <ligand>
        <name>[4Fe-4S] cluster</name>
        <dbReference type="ChEBI" id="CHEBI:49883"/>
    </ligand>
</feature>
<feature type="binding site" evidence="1">
    <location>
        <position position="314"/>
    </location>
    <ligand>
        <name>[4Fe-4S] cluster</name>
        <dbReference type="ChEBI" id="CHEBI:49883"/>
    </ligand>
</feature>
<feature type="binding site" evidence="1">
    <location>
        <position position="357"/>
    </location>
    <ligand>
        <name>[4Fe-4S] cluster</name>
        <dbReference type="ChEBI" id="CHEBI:49883"/>
    </ligand>
</feature>
<feature type="binding site" evidence="1">
    <location>
        <position position="364"/>
    </location>
    <ligand>
        <name>[4Fe-4S] cluster</name>
        <dbReference type="ChEBI" id="CHEBI:49883"/>
    </ligand>
</feature>
<organism>
    <name type="scientific">Xanthomonas euvesicatoria pv. vesicatoria (strain 85-10)</name>
    <name type="common">Xanthomonas campestris pv. vesicatoria</name>
    <dbReference type="NCBI Taxonomy" id="316273"/>
    <lineage>
        <taxon>Bacteria</taxon>
        <taxon>Pseudomonadati</taxon>
        <taxon>Pseudomonadota</taxon>
        <taxon>Gammaproteobacteria</taxon>
        <taxon>Lysobacterales</taxon>
        <taxon>Lysobacteraceae</taxon>
        <taxon>Xanthomonas</taxon>
    </lineage>
</organism>
<proteinExistence type="inferred from homology"/>